<feature type="chain" id="PRO_0000462255" description="Structural polyprotein">
    <location>
        <begin position="1"/>
        <end position="1319"/>
    </location>
</feature>
<feature type="chain" id="PRO_0000462256" description="Capsid protein">
    <location>
        <begin position="1"/>
        <end position="281"/>
    </location>
</feature>
<feature type="chain" id="PRO_0000462257" description="Precursor of protein E3/E2">
    <location>
        <begin position="282"/>
        <end position="790"/>
    </location>
</feature>
<feature type="chain" id="PRO_0000462258" description="Assembly protein E3">
    <location>
        <begin position="282"/>
        <end position="352"/>
    </location>
</feature>
<feature type="chain" id="PRO_0000462259" description="Spike glycoprotein E2">
    <location>
        <begin position="353"/>
        <end position="790"/>
    </location>
</feature>
<feature type="chain" id="PRO_0000462260" description="6K protein">
    <location>
        <begin position="791"/>
        <end position="858"/>
    </location>
</feature>
<feature type="chain" id="PRO_0000462261" description="Spike glycoprotein E1">
    <location>
        <begin position="859"/>
        <end position="1319"/>
    </location>
</feature>
<feature type="topological domain" description="Extracellular" evidence="11">
    <location>
        <begin position="1"/>
        <end position="733"/>
    </location>
</feature>
<feature type="transmembrane region" description="Helical" evidence="11">
    <location>
        <begin position="734"/>
        <end position="754"/>
    </location>
</feature>
<feature type="topological domain" description="Cytoplasmic" evidence="11">
    <location>
        <begin position="755"/>
        <end position="791"/>
    </location>
</feature>
<feature type="topological domain" description="Extracellular" evidence="11">
    <location>
        <begin position="792"/>
        <end position="806"/>
    </location>
</feature>
<feature type="transmembrane region" description="Helical" evidence="11">
    <location>
        <begin position="807"/>
        <end position="827"/>
    </location>
</feature>
<feature type="topological domain" description="Cytoplasmic" evidence="11">
    <location>
        <begin position="828"/>
        <end position="832"/>
    </location>
</feature>
<feature type="transmembrane region" description="Helical" evidence="11">
    <location>
        <begin position="833"/>
        <end position="853"/>
    </location>
</feature>
<feature type="topological domain" description="Extracellular" evidence="11">
    <location>
        <begin position="854"/>
        <end position="1285"/>
    </location>
</feature>
<feature type="transmembrane region" description="Helical" evidence="11">
    <location>
        <begin position="1286"/>
        <end position="1306"/>
    </location>
</feature>
<feature type="topological domain" description="Cytoplasmic" evidence="11">
    <location>
        <begin position="1307"/>
        <end position="1319"/>
    </location>
</feature>
<feature type="domain" description="Peptidase S3" evidence="12">
    <location>
        <begin position="133"/>
        <end position="281"/>
    </location>
</feature>
<feature type="region of interest" description="Host transcription inhibition" evidence="4">
    <location>
        <begin position="48"/>
        <end position="81"/>
    </location>
</feature>
<feature type="region of interest" description="Binding to the viral RNA" evidence="7">
    <location>
        <begin position="101"/>
        <end position="134"/>
    </location>
</feature>
<feature type="region of interest" description="Ribosome-binding" evidence="7">
    <location>
        <begin position="119"/>
        <end position="133"/>
    </location>
</feature>
<feature type="region of interest" description="Dimerization of the capsid protein" evidence="5">
    <location>
        <begin position="202"/>
        <end position="212"/>
    </location>
</feature>
<feature type="region of interest" description="Dimerization of the capsid protein" evidence="5">
    <location>
        <begin position="238"/>
        <end position="242"/>
    </location>
</feature>
<feature type="region of interest" description="Functions as an uncleaved signal peptide for the precursor of protein E3/E2" evidence="1">
    <location>
        <begin position="282"/>
        <end position="301"/>
    </location>
</feature>
<feature type="region of interest" description="Transient transmembrane before p62-6K protein processing" evidence="11">
    <location>
        <begin position="759"/>
        <end position="783"/>
    </location>
</feature>
<feature type="region of interest" description="E1 fusion peptide loop" evidence="10">
    <location>
        <begin position="953"/>
        <end position="970"/>
    </location>
</feature>
<feature type="short sequence motif" description="Nuclear localization signal" evidence="4">
    <location>
        <begin position="74"/>
        <end position="119"/>
    </location>
</feature>
<feature type="short sequence motif" description="Nuclear export signal" evidence="4">
    <location>
        <begin position="164"/>
        <end position="174"/>
    </location>
</feature>
<feature type="active site" description="Charge relay system" evidence="12">
    <location>
        <position position="159"/>
    </location>
</feature>
<feature type="active site" description="Charge relay system" evidence="12">
    <location>
        <position position="181"/>
    </location>
</feature>
<feature type="active site" description="Charge relay system" evidence="12">
    <location>
        <position position="232"/>
    </location>
</feature>
<feature type="site" description="Involved in dimerization of the capsid protein" evidence="9">
    <location>
        <position position="206"/>
    </location>
</feature>
<feature type="site" description="Involved in dimerization of the capsid protein" evidence="9">
    <location>
        <position position="239"/>
    </location>
</feature>
<feature type="site" description="Cleavage; by autolysis" evidence="1">
    <location>
        <begin position="281"/>
        <end position="282"/>
    </location>
</feature>
<feature type="site" description="Cleavage; by host furin" evidence="1">
    <location>
        <begin position="352"/>
        <end position="353"/>
    </location>
</feature>
<feature type="site" description="Cleavage; by host signal peptidase" evidence="1">
    <location>
        <begin position="352"/>
        <end position="353"/>
    </location>
</feature>
<feature type="site" description="Cleavage; by host signal peptidase" evidence="1">
    <location>
        <begin position="790"/>
        <end position="791"/>
    </location>
</feature>
<feature type="site" description="Cleavage; by host signal peptidase" evidence="2">
    <location>
        <begin position="858"/>
        <end position="859"/>
    </location>
</feature>
<feature type="lipid moiety-binding region" description="S-palmitoyl cysteine; by host" evidence="2">
    <location>
        <position position="783"/>
    </location>
</feature>
<feature type="lipid moiety-binding region" description="S-palmitoyl cysteine; by host" evidence="2">
    <location>
        <position position="784"/>
    </location>
</feature>
<feature type="lipid moiety-binding region" description="S-stearoyl cysteine; by host" evidence="1">
    <location>
        <position position="1309"/>
    </location>
</feature>
<feature type="disulfide bond" evidence="3">
    <location>
        <begin position="296"/>
        <end position="305"/>
    </location>
</feature>
<feature type="disulfide bond" evidence="6">
    <location>
        <begin position="380"/>
        <end position="486"/>
    </location>
</feature>
<feature type="disulfide bond" evidence="6">
    <location>
        <begin position="383"/>
        <end position="388"/>
    </location>
</feature>
<feature type="disulfide bond" evidence="6">
    <location>
        <begin position="453"/>
        <end position="467"/>
    </location>
</feature>
<feature type="disulfide bond" evidence="6">
    <location>
        <begin position="515"/>
        <end position="632"/>
    </location>
</feature>
<feature type="disulfide bond" evidence="6">
    <location>
        <begin position="908"/>
        <end position="983"/>
    </location>
</feature>
<feature type="disulfide bond" evidence="6">
    <location>
        <begin position="921"/>
        <end position="963"/>
    </location>
</feature>
<feature type="disulfide bond" evidence="6">
    <location>
        <begin position="922"/>
        <end position="965"/>
    </location>
</feature>
<feature type="disulfide bond" evidence="6">
    <location>
        <begin position="927"/>
        <end position="947"/>
    </location>
</feature>
<feature type="disulfide bond" evidence="6">
    <location>
        <begin position="1133"/>
        <end position="1145"/>
    </location>
</feature>
<feature type="disulfide bond" evidence="6">
    <location>
        <begin position="1175"/>
        <end position="1251"/>
    </location>
</feature>
<feature type="disulfide bond" evidence="6">
    <location>
        <begin position="1180"/>
        <end position="1255"/>
    </location>
</feature>
<feature type="disulfide bond" evidence="6">
    <location>
        <begin position="1202"/>
        <end position="1245"/>
    </location>
</feature>
<protein>
    <recommendedName>
        <fullName>Structural polyprotein</fullName>
    </recommendedName>
    <alternativeName>
        <fullName>p130</fullName>
    </alternativeName>
    <component>
        <recommendedName>
            <fullName>Capsid protein</fullName>
            <ecNumber evidence="1">3.4.21.90</ecNumber>
        </recommendedName>
        <alternativeName>
            <fullName>Coat protein</fullName>
            <shortName>C</shortName>
        </alternativeName>
    </component>
    <component>
        <recommendedName>
            <fullName>Precursor of protein E3/E2</fullName>
        </recommendedName>
        <alternativeName>
            <fullName>p62</fullName>
        </alternativeName>
        <alternativeName>
            <fullName>pE2</fullName>
        </alternativeName>
    </component>
    <component>
        <recommendedName>
            <fullName>Assembly protein E3</fullName>
        </recommendedName>
    </component>
    <component>
        <recommendedName>
            <fullName>Spike glycoprotein E2</fullName>
        </recommendedName>
        <alternativeName>
            <fullName>E2 envelope glycoprotein</fullName>
        </alternativeName>
    </component>
    <component>
        <recommendedName>
            <fullName>6K protein</fullName>
        </recommendedName>
    </component>
    <component>
        <recommendedName>
            <fullName>Spike glycoprotein E1</fullName>
        </recommendedName>
        <alternativeName>
            <fullName>E1 envelope glycoprotein</fullName>
        </alternativeName>
    </component>
</protein>
<reference key="1">
    <citation type="journal article" date="2005" name="Dis. Aquat. Organ.">
        <title>New subtype of salmonid alphavirus (SAV), Togaviridae, from Atlantic salmon Salmo salar and rainbow trout Oncorhynchus mykiss in Norway.</title>
        <authorList>
            <person name="Hodneland K."/>
            <person name="Bratland A."/>
            <person name="Christie K.E."/>
            <person name="Endresen C."/>
            <person name="Nylund A."/>
        </authorList>
    </citation>
    <scope>NUCLEOTIDE SEQUENCE</scope>
    <source>
        <strain>Tun1</strain>
    </source>
</reference>
<reference key="2">
    <citation type="journal article" date="2014" name="PLoS ONE">
        <title>A 6K-deletion variant of salmonid alphavirus is non-viable but can be rescued through RNA recombination.</title>
        <authorList>
            <person name="Guo T.C."/>
            <person name="Johansson D.X."/>
            <person name="Haugland O."/>
            <person name="Liljestroem P."/>
            <person name="Evensen O."/>
        </authorList>
    </citation>
    <scope>FUNCTION (6K PROTEIN)</scope>
</reference>
<keyword id="KW-0167">Capsid protein</keyword>
<keyword id="KW-0165">Cleavage on pair of basic residues</keyword>
<keyword id="KW-1015">Disulfide bond</keyword>
<keyword id="KW-1170">Fusion of virus membrane with host endosomal membrane</keyword>
<keyword id="KW-1168">Fusion of virus membrane with host membrane</keyword>
<keyword id="KW-0325">Glycoprotein</keyword>
<keyword id="KW-1032">Host cell membrane</keyword>
<keyword id="KW-1035">Host cytoplasm</keyword>
<keyword id="KW-1038">Host endoplasmic reticulum</keyword>
<keyword id="KW-1040">Host Golgi apparatus</keyword>
<keyword id="KW-1043">Host membrane</keyword>
<keyword id="KW-1048">Host nucleus</keyword>
<keyword id="KW-0945">Host-virus interaction</keyword>
<keyword id="KW-0378">Hydrolase</keyword>
<keyword id="KW-0407">Ion channel</keyword>
<keyword id="KW-0406">Ion transport</keyword>
<keyword id="KW-0449">Lipoprotein</keyword>
<keyword id="KW-0472">Membrane</keyword>
<keyword id="KW-0564">Palmitate</keyword>
<keyword id="KW-0645">Protease</keyword>
<keyword id="KW-0694">RNA-binding</keyword>
<keyword id="KW-0720">Serine protease</keyword>
<keyword id="KW-1144">T=4 icosahedral capsid protein</keyword>
<keyword id="KW-0812">Transmembrane</keyword>
<keyword id="KW-1133">Transmembrane helix</keyword>
<keyword id="KW-0813">Transport</keyword>
<keyword id="KW-1161">Viral attachment to host cell</keyword>
<keyword id="KW-1234">Viral attachment to host entry receptor</keyword>
<keyword id="KW-1182">Viral ion channel</keyword>
<keyword id="KW-1162">Viral penetration into host cytoplasm</keyword>
<keyword id="KW-0946">Virion</keyword>
<keyword id="KW-1160">Virus entry into host cell</keyword>
<organismHost>
    <name type="scientific">Oncorhynchus mykiss</name>
    <name type="common">Rainbow trout</name>
    <name type="synonym">Salmo gairdneri</name>
    <dbReference type="NCBI Taxonomy" id="8022"/>
</organismHost>
<organismHost>
    <name type="scientific">Salmo salar</name>
    <name type="common">Atlantic salmon</name>
    <dbReference type="NCBI Taxonomy" id="8030"/>
</organismHost>
<organism>
    <name type="scientific">Alphavirus salmon subtype 3</name>
    <name type="common">SAV3</name>
    <name type="synonym">Norwegian salmonid alphavirus</name>
    <dbReference type="NCBI Taxonomy" id="344701"/>
    <lineage>
        <taxon>Viruses</taxon>
        <taxon>Riboviria</taxon>
        <taxon>Orthornavirae</taxon>
        <taxon>Kitrinoviricota</taxon>
        <taxon>Alsuviricetes</taxon>
        <taxon>Martellivirales</taxon>
        <taxon>Togaviridae</taxon>
        <taxon>Alphavirus</taxon>
    </lineage>
</organism>
<accession>Q53AM4</accession>
<name>POLS_SAV3</name>
<evidence type="ECO:0000250" key="1">
    <source>
        <dbReference type="UniProtKB" id="P03315"/>
    </source>
</evidence>
<evidence type="ECO:0000250" key="2">
    <source>
        <dbReference type="UniProtKB" id="P03316"/>
    </source>
</evidence>
<evidence type="ECO:0000250" key="3">
    <source>
        <dbReference type="UniProtKB" id="P08768"/>
    </source>
</evidence>
<evidence type="ECO:0000250" key="4">
    <source>
        <dbReference type="UniProtKB" id="P09592"/>
    </source>
</evidence>
<evidence type="ECO:0000250" key="5">
    <source>
        <dbReference type="UniProtKB" id="P0DOK1"/>
    </source>
</evidence>
<evidence type="ECO:0000250" key="6">
    <source>
        <dbReference type="UniProtKB" id="P13897"/>
    </source>
</evidence>
<evidence type="ECO:0000250" key="7">
    <source>
        <dbReference type="UniProtKB" id="P27284"/>
    </source>
</evidence>
<evidence type="ECO:0000250" key="8">
    <source>
        <dbReference type="UniProtKB" id="Q5XXP3"/>
    </source>
</evidence>
<evidence type="ECO:0000250" key="9">
    <source>
        <dbReference type="UniProtKB" id="Q86925"/>
    </source>
</evidence>
<evidence type="ECO:0000250" key="10">
    <source>
        <dbReference type="UniProtKB" id="Q8JUX5"/>
    </source>
</evidence>
<evidence type="ECO:0000255" key="11"/>
<evidence type="ECO:0000255" key="12">
    <source>
        <dbReference type="PROSITE-ProRule" id="PRU01027"/>
    </source>
</evidence>
<evidence type="ECO:0000305" key="13">
    <source>
    </source>
</evidence>
<comment type="function">
    <molecule>Capsid protein</molecule>
    <text evidence="1 2 7">Forms an icosahedral capsid with a T=4 symmetry composed of 240 copies of the capsid protein surrounded by a lipid membrane through which penetrate 80 spikes composed of trimers of E1-E2 heterodimers (By similarity). The capsid protein binds to the viral RNA genome at a site adjacent to a ribosome binding site for viral genome translation following genome release (By similarity). Possesses a protease activity that results in its autocatalytic cleavage from the nascent structural protein (By similarity). Following its self-cleavage, the capsid protein transiently associates with ribosomes, and within several minutes the protein binds to viral RNA and rapidly assembles into icosahedric core particles (By similarity). The resulting nucleocapsid eventually associates with the cytoplasmic domain of the spike glycoprotein E2 at the cell membrane, leading to budding and formation of mature virions (By similarity). In case of infection, new virions attach to target cells and after clathrin-mediated endocytosis their membrane fuses with the host endosomal membrane (By similarity). This leads to the release of the nucleocapsid into the cytoplasm, followed by an uncoating event necessary for the genomic RNA to become accessible (By similarity). The uncoating might be triggered by the interaction of capsid proteins with ribosomes (By similarity). Binding of ribosomes would release the genomic RNA since the same region is genomic RNA-binding and ribosome-binding (By similarity). Specifically inhibits interleukin-1 receptor-associated kinase 1/IRAK1-dependent signaling during viral entry, representing a means by which the alphaviruses may evade innate immune detection and activation prior to viral gene expression (By similarity).</text>
</comment>
<comment type="function">
    <molecule>Assembly protein E3</molecule>
    <text evidence="1">Provides the signal sequence for the translocation of the precursor of protein E3/E2 to the host endoplasmic reticulum. Furin-cleaved E3 remains associated with spike glycoprotein E1 and mediates pH protection of the latter during the transport via the secretory pathway. After virion release from the host cell, the assembly protein E3 is gradually released in the extracellular space.</text>
</comment>
<comment type="function">
    <molecule>Spike glycoprotein E2</molecule>
    <text evidence="2">Plays a role in viral attachment to target host cell, by binding to the cell receptor. Synthesized as a p62 precursor which is processed by furin at the cell membrane just before virion budding, giving rise to E2-E1 heterodimer. The p62-E1 heterodimer is stable, whereas E2-E1 is unstable and dissociate at low pH. p62 is processed at the last step, presumably to avoid E1 fusion activation before its final export to cell surface. E2 C-terminus contains a transitory transmembrane that would be disrupted by palmitoylation, resulting in reorientation of the C-terminal tail from lumenal to cytoplasmic side. This step is critical since E2 C-terminus is involved in budding by interacting with capsid proteins. This release of E2 C-terminus in cytoplasm occurs lately in protein export, and precludes premature assembly of particles at the endoplasmic reticulum membrane.</text>
</comment>
<comment type="function">
    <molecule>6K protein</molecule>
    <text evidence="1 2 13">Acts as a viroporin that participates in virus glycoprotein processing and transport to the plasma membrane, cell permeabilization and budding of viral particles (Probable). Disrupts the calcium homeostasis of the cell, probably at the endoplasmic reticulum level (By similarity). This leads to cytoplasmic calcium elevation (By similarity). Because of its lipophilic properties, the 6K protein is postulated to influence the selection of lipids that interact with the transmembrane domains of the glycoproteins, which, in turn, affects the deformability of the bilayer required for the extreme curvature that occurs as budding proceeds. Present in low amount in virions, about 3% compared to viral glycoproteins (By similarity).</text>
</comment>
<comment type="function">
    <molecule>Spike glycoprotein E1</molecule>
    <text evidence="1">Class II viral fusion protein. Fusion activity is inactive as long as E1 is bound to E2 in mature virion. After virus attachment to target cell and endocytosis, acidification of the endosome induce dissociation of E1/E2 heterodimer and concomitant trimerization of the E1 subunits. This E1 trimer is fusion active, and promotes release of viral nucleocapsid in cytoplasm after endosome and viral membrane fusion. Efficient fusion requires the presence of cholesterol and sphingolipid in the target membrane.</text>
</comment>
<comment type="catalytic activity">
    <reaction evidence="1">
        <text>Autocatalytic release of the core protein from the N-terminus of the togavirus structural polyprotein by hydrolysis of a -Trp-|-Ser- bond.</text>
        <dbReference type="EC" id="3.4.21.90"/>
    </reaction>
</comment>
<comment type="subunit">
    <molecule>Capsid protein</molecule>
    <text evidence="2 9 10">Homodimer (By similarity). Homomultimer (By similarity). Interacts with host karyopherin KPNA4; this interaction allows the nuclear import of the viral capsid protein (By similarity). Interacts with spike glycoprotein E2 (By similarity). Interacts with host IRAK1; the interaction leads to inhibition of IRAK1-dependent signaling (By similarity).</text>
</comment>
<comment type="subunit">
    <molecule>Precursor of protein E3/E2</molecule>
    <text evidence="1 2 5 10">The precursor of protein E3/E2 and E1 form a heterodimer shortly after synthesis (By similarity).</text>
</comment>
<comment type="subunit">
    <molecule>Spike glycoprotein E1</molecule>
    <text evidence="2 10">Interacts with spike glycoprotein E2 (By similarity). The precursor of protein E3/E2 and E1 form a heterodimer shortly after synthesis (By similarity). Processing of the precursor of protein E3/E2 into E2 and E3 results in a heterodimer of the spike glycoproteins E2 and E1 (By similarity). Spike at virion surface are constituted of three E2-E1 heterodimers (By similarity). After target cell attachment and endocytosis, E1 change conformation to form homotrimers (By similarity). Interacts with 6K protein (By similarity).</text>
</comment>
<comment type="subunit">
    <molecule>Spike glycoprotein E2</molecule>
    <text evidence="2">Interacts with spike glycoprotein E1 (By similarity). Processing of the precursor of protein E3/E2 into E2 and E3 results in a heterodimer of the spike glycoproteins E2 and E1 (By similarity). Spike at virion surface are constituted of a trimer of E2-E1 heterodimers (By similarity). Interacts with 6K protein (By similarity).</text>
</comment>
<comment type="subunit">
    <molecule>6K protein</molecule>
    <text evidence="2 8">Oligomer (By similarity). Interacts with spike glycoprotein E1. Interacts with spike glycoprotein E2 (By similarity).</text>
</comment>
<comment type="subcellular location">
    <molecule>Capsid protein</molecule>
    <subcellularLocation>
        <location evidence="2">Virion</location>
    </subcellularLocation>
    <subcellularLocation>
        <location evidence="10">Host cytoplasm</location>
    </subcellularLocation>
    <subcellularLocation>
        <location evidence="2">Host cell membrane</location>
    </subcellularLocation>
    <subcellularLocation>
        <location evidence="10">Host nucleus</location>
    </subcellularLocation>
    <text evidence="10">Shuttles between the cytoplasm and the nucleus.</text>
</comment>
<comment type="subcellular location">
    <molecule>Spike glycoprotein E2</molecule>
    <subcellularLocation>
        <location evidence="10">Virion membrane</location>
        <topology evidence="11">Single-pass type I membrane protein</topology>
    </subcellularLocation>
    <subcellularLocation>
        <location evidence="2">Host cell membrane</location>
        <topology evidence="10">Single-pass type I membrane protein</topology>
    </subcellularLocation>
</comment>
<comment type="subcellular location">
    <molecule>6K protein</molecule>
    <subcellularLocation>
        <location evidence="2">Host cell membrane</location>
        <topology evidence="11">Multi-pass membrane protein</topology>
    </subcellularLocation>
    <subcellularLocation>
        <location evidence="2">Virion membrane</location>
        <topology evidence="11">Multi-pass membrane protein</topology>
    </subcellularLocation>
    <subcellularLocation>
        <location evidence="2">Host Golgi apparatus</location>
    </subcellularLocation>
    <subcellularLocation>
        <location>Host Golgi apparatus</location>
        <location>Host trans-Golgi network</location>
    </subcellularLocation>
    <subcellularLocation>
        <location evidence="2">Host endoplasmic reticulum</location>
    </subcellularLocation>
</comment>
<comment type="subcellular location">
    <molecule>Spike glycoprotein E1</molecule>
    <subcellularLocation>
        <location evidence="10">Virion membrane</location>
        <topology evidence="11">Single-pass type I membrane protein</topology>
    </subcellularLocation>
    <subcellularLocation>
        <location evidence="2 10">Host cell membrane</location>
        <topology evidence="11">Single-pass type I membrane protein</topology>
    </subcellularLocation>
</comment>
<comment type="domain">
    <molecule>Capsid protein</molecule>
    <text evidence="2 4">The very N-terminus also plays a role in the particle assembly process (By similarity). The N-terminus also contains a nuclear localization signal and a supra nuclear export signal (supraNES), which is an unusually strong NES that mediates host CRM1 binding in the absence of RanGTP and thus can bind CRM1, not only in the nucleus, but also in the cytoplasm (By similarity). The C-terminus functions as a protease during translation to cleave itself from the translating structural polyprotein (By similarity).</text>
</comment>
<comment type="domain">
    <text evidence="1">Structural polyprotein: As soon as the capsid protein has been autocleaved, an internal uncleaved signal peptide directs the remaining polyprotein to the endoplasmic reticulum.</text>
</comment>
<comment type="PTM">
    <text evidence="1">Structural polyprotein: Specific enzymatic cleavages in vivo yield mature proteins. Capsid protein is auto-cleaved during polyprotein translation, unmasking a signal peptide at the N-terminus of the precursor of E3/E2 (By similarity). The remaining polyprotein is then targeted to the host endoplasmic reticulum, where host signal peptidase cleaves it into pE2, 6K and E1 proteins. pE2 is further processed to mature E3 and E2 by host furin in trans-Golgi vesicle (By similarity).</text>
</comment>
<comment type="PTM">
    <molecule>Spike glycoprotein E2</molecule>
    <text evidence="1">Palmitoylated via thioester bonds. These palmitoylations may induce disruption of the C-terminus transmembrane. This would result in the reorientation of E2 C-terminus from lumenal to cytoplasmic side.</text>
</comment>
<comment type="PTM">
    <molecule>Spike glycoprotein E1</molecule>
    <text evidence="1">N-glycosylated.</text>
</comment>
<comment type="PTM">
    <molecule>Spike glycoprotein E2</molecule>
    <text evidence="1">N-glycosylated.</text>
</comment>
<comment type="PTM">
    <molecule>Assembly protein E3</molecule>
    <text evidence="1">N-glycosylated.</text>
</comment>
<comment type="PTM">
    <molecule>6K protein</molecule>
    <text evidence="1">Palmitoylated via thioester bonds.</text>
</comment>
<comment type="miscellaneous">
    <text evidence="9">Structural polyprotein: Translated from a subgenomic RNA synthesized during togavirus replication.</text>
</comment>
<dbReference type="EC" id="3.4.21.90" evidence="1"/>
<dbReference type="EMBL" id="AY604238">
    <property type="protein sequence ID" value="AAU01402.1"/>
    <property type="molecule type" value="Genomic_RNA"/>
</dbReference>
<dbReference type="GO" id="GO:0030430">
    <property type="term" value="C:host cell cytoplasm"/>
    <property type="evidence" value="ECO:0007669"/>
    <property type="project" value="UniProtKB-SubCell"/>
</dbReference>
<dbReference type="GO" id="GO:0020002">
    <property type="term" value="C:host cell plasma membrane"/>
    <property type="evidence" value="ECO:0007669"/>
    <property type="project" value="UniProtKB-SubCell"/>
</dbReference>
<dbReference type="GO" id="GO:0016020">
    <property type="term" value="C:membrane"/>
    <property type="evidence" value="ECO:0007669"/>
    <property type="project" value="UniProtKB-KW"/>
</dbReference>
<dbReference type="GO" id="GO:0039619">
    <property type="term" value="C:T=4 icosahedral viral capsid"/>
    <property type="evidence" value="ECO:0007669"/>
    <property type="project" value="UniProtKB-KW"/>
</dbReference>
<dbReference type="GO" id="GO:0055036">
    <property type="term" value="C:virion membrane"/>
    <property type="evidence" value="ECO:0007669"/>
    <property type="project" value="UniProtKB-SubCell"/>
</dbReference>
<dbReference type="GO" id="GO:0004252">
    <property type="term" value="F:serine-type endopeptidase activity"/>
    <property type="evidence" value="ECO:0007669"/>
    <property type="project" value="InterPro"/>
</dbReference>
<dbReference type="GO" id="GO:0005198">
    <property type="term" value="F:structural molecule activity"/>
    <property type="evidence" value="ECO:0007669"/>
    <property type="project" value="InterPro"/>
</dbReference>
<dbReference type="GO" id="GO:0039654">
    <property type="term" value="P:fusion of virus membrane with host endosome membrane"/>
    <property type="evidence" value="ECO:0007669"/>
    <property type="project" value="UniProtKB-KW"/>
</dbReference>
<dbReference type="GO" id="GO:0006508">
    <property type="term" value="P:proteolysis"/>
    <property type="evidence" value="ECO:0007669"/>
    <property type="project" value="UniProtKB-KW"/>
</dbReference>
<dbReference type="GO" id="GO:0046718">
    <property type="term" value="P:symbiont entry into host cell"/>
    <property type="evidence" value="ECO:0007669"/>
    <property type="project" value="UniProtKB-KW"/>
</dbReference>
<dbReference type="GO" id="GO:0019062">
    <property type="term" value="P:virion attachment to host cell"/>
    <property type="evidence" value="ECO:0007669"/>
    <property type="project" value="UniProtKB-KW"/>
</dbReference>
<dbReference type="Gene3D" id="1.10.287.2230">
    <property type="match status" value="1"/>
</dbReference>
<dbReference type="Gene3D" id="2.60.40.350">
    <property type="match status" value="1"/>
</dbReference>
<dbReference type="Gene3D" id="2.60.40.3200">
    <property type="entry name" value="Alphavirus E2 glycoprotein, A domain"/>
    <property type="match status" value="1"/>
</dbReference>
<dbReference type="Gene3D" id="2.60.40.4310">
    <property type="entry name" value="Alphavirus E2 glycoprotein, domain B"/>
    <property type="match status" value="1"/>
</dbReference>
<dbReference type="Gene3D" id="2.60.40.2400">
    <property type="entry name" value="Alphavirus E2 glycoprotein, domain C"/>
    <property type="match status" value="1"/>
</dbReference>
<dbReference type="Gene3D" id="2.60.98.10">
    <property type="entry name" value="Tick-borne Encephalitis virus Glycoprotein, domain 1"/>
    <property type="match status" value="3"/>
</dbReference>
<dbReference type="Gene3D" id="2.40.10.10">
    <property type="entry name" value="Trypsin-like serine proteases"/>
    <property type="match status" value="2"/>
</dbReference>
<dbReference type="InterPro" id="IPR002548">
    <property type="entry name" value="Alpha_E1_glycop"/>
</dbReference>
<dbReference type="InterPro" id="IPR000936">
    <property type="entry name" value="Alpha_E2_glycop"/>
</dbReference>
<dbReference type="InterPro" id="IPR002533">
    <property type="entry name" value="Alpha_E3_glycop"/>
</dbReference>
<dbReference type="InterPro" id="IPR042304">
    <property type="entry name" value="Alphavir_E2_A"/>
</dbReference>
<dbReference type="InterPro" id="IPR042305">
    <property type="entry name" value="Alphavir_E2_B"/>
</dbReference>
<dbReference type="InterPro" id="IPR042306">
    <property type="entry name" value="Alphavir_E2_C"/>
</dbReference>
<dbReference type="InterPro" id="IPR000336">
    <property type="entry name" value="Flavivir/Alphavir_Ig-like_sf"/>
</dbReference>
<dbReference type="InterPro" id="IPR036253">
    <property type="entry name" value="Glycoprot_cen/dimer_sf"/>
</dbReference>
<dbReference type="InterPro" id="IPR038055">
    <property type="entry name" value="Glycoprot_E_dimer_dom"/>
</dbReference>
<dbReference type="InterPro" id="IPR014756">
    <property type="entry name" value="Ig_E-set"/>
</dbReference>
<dbReference type="InterPro" id="IPR009003">
    <property type="entry name" value="Peptidase_S1_PA"/>
</dbReference>
<dbReference type="InterPro" id="IPR043504">
    <property type="entry name" value="Peptidase_S1_PA_chymotrypsin"/>
</dbReference>
<dbReference type="InterPro" id="IPR000930">
    <property type="entry name" value="Peptidase_S3"/>
</dbReference>
<dbReference type="Pfam" id="PF01589">
    <property type="entry name" value="Alpha_E1_glycop"/>
    <property type="match status" value="1"/>
</dbReference>
<dbReference type="Pfam" id="PF00943">
    <property type="entry name" value="Alpha_E2_glycop"/>
    <property type="match status" value="1"/>
</dbReference>
<dbReference type="Pfam" id="PF01563">
    <property type="entry name" value="Alpha_E3_glycop"/>
    <property type="match status" value="1"/>
</dbReference>
<dbReference type="Pfam" id="PF00944">
    <property type="entry name" value="Peptidase_S3"/>
    <property type="match status" value="1"/>
</dbReference>
<dbReference type="PRINTS" id="PR00798">
    <property type="entry name" value="TOGAVIRIN"/>
</dbReference>
<dbReference type="SUPFAM" id="SSF81296">
    <property type="entry name" value="E set domains"/>
    <property type="match status" value="1"/>
</dbReference>
<dbReference type="SUPFAM" id="SSF50494">
    <property type="entry name" value="Trypsin-like serine proteases"/>
    <property type="match status" value="1"/>
</dbReference>
<dbReference type="SUPFAM" id="SSF56983">
    <property type="entry name" value="Viral glycoprotein, central and dimerisation domains"/>
    <property type="match status" value="1"/>
</dbReference>
<dbReference type="PROSITE" id="PS51690">
    <property type="entry name" value="ALPHAVIRUS_CP"/>
    <property type="match status" value="1"/>
</dbReference>
<sequence length="1319" mass="142582">MFPMQFTNSAYRQMEPMFAPGPRGQVQPYRPRTKRRQEPQVGNAAIAALANQMSALQLQVAGLAGQARVDRRGPRRVQKSKQKKKNPSNGEKPKEKKKKQKQQEKKGSGGVIKKPRNRPGKEVRISVKRARQSTFPVYHDGAISGYAVLIGSRVFKPAHVKGKIDHPELADIKFQVAEDMDLEAAAYPKSMRDQAAEPATMMDGVYNWEYGTIRVEDNVVIDASGRGKPGDSGRAITDNSGKVVGIVLGGGPDGRRTRLSVIGFDKKMKAREIAYSEAIPWTRAPALLLLPMVIACTYNSNTFDCSKPSCQDCCITAEPKKAMAMLKDNLNDPNYWDLLIAVTTCNSARKKRAVSTSPAAVYDTQILAAHAAASPYRAYCPDCDGTACISPIAIDEVVSSGSDHVLRIRVGSQSGVTAKGGAAGETSLRYLGRDGKVHAADNTRLVVRTTAKCDVLQATGHYILASCPEGQSITVAATLDGTRHQCTTVFEHQVTEKFTRERSKGHHLSDLTKKCTRFSTTPKKSAPYLVDVYDALPISVEISTVVTCNDNQCTVKVPPGTTVKFDKKCKSAAQATVTFTSDSQTFTCEEPVLTAASITQGKPHLRSSMLPSGGKEVKARIPFPFPPETATCRVSVAPLPSITYEESDVLLAGTAKYPVLLTTRNLGFHSNATSEWIQGKYLRRIPVTPQGIELTWGNNAPLHFWSSVRYASGDADAYPWELLVHHTKHHPEYAWAFVGVACGLLVIAVCMFACACNRVRYSLVANTFNPNPPPLTALTAALCCIPGARADQPYLDIIAYLWTNSKVAFGLQCAAPVACVLIVTYALRHCRLCCKSFLGVRGWSALLVILAYVQSCKSYEHTVVVPMDPRAPSYEAVINRNGYDPLKLTIAVNFTVISPTTALEYWTCASVPIVEPPHVGCCTSVSCPSDLSTLHAFTGKAVSDVHCDVHTNVYPLLWGAAHCFCSTENTQVSAVAATVSEFCAQDSERAEAFSVHSSSVTAEVLVTLGEVVTAVHVYVDGVTSARGTDLKIVAGPITTDYSPFDRKVVRIGEEVYNYDWPPYGAGRPGTFGDIQARSTNYVKPNDLYGDIGIEVLQPTNDHVHVAYTYTTSGLLRWLQDAPKPLSVTAPHGCKISANPLLALDCGVGAVPMSINIPDAKFTRKLKDPKPSALKCVVDSCEYGVDYGGAATITYEGHEAGKCGIHSLTPGVPLRTSVVEVVAGANTVKTTFSSPTPEVTLEVEICSAMVTCASECTPPKEHVVATRPRHGSDTGGYISGPAMRWAGGIVGTLAVLFLILAVTYCVVKKCRSKRIRIVKS</sequence>
<proteinExistence type="inferred from homology"/>